<keyword id="KW-0143">Chaperone</keyword>
<keyword id="KW-1015">Disulfide bond</keyword>
<keyword id="KW-0256">Endoplasmic reticulum</keyword>
<keyword id="KW-0597">Phosphoprotein</keyword>
<keyword id="KW-1185">Reference proteome</keyword>
<keyword id="KW-0677">Repeat</keyword>
<keyword id="KW-0678">Repressor</keyword>
<keyword id="KW-0732">Signal</keyword>
<keyword id="KW-0346">Stress response</keyword>
<keyword id="KW-0802">TPR repeat</keyword>
<keyword id="KW-0810">Translation regulation</keyword>
<keyword id="KW-0834">Unfolded protein response</keyword>
<feature type="signal peptide" evidence="4">
    <location>
        <begin position="1"/>
        <end position="31"/>
    </location>
</feature>
<feature type="chain" id="PRO_0000071044" description="DnaJ homolog subfamily C member 3">
    <location>
        <begin position="32"/>
        <end position="504"/>
    </location>
</feature>
<feature type="repeat" description="TPR 1">
    <location>
        <begin position="37"/>
        <end position="70"/>
    </location>
</feature>
<feature type="repeat" description="TPR 2">
    <location>
        <begin position="72"/>
        <end position="104"/>
    </location>
</feature>
<feature type="repeat" description="TPR 3">
    <location>
        <begin position="105"/>
        <end position="138"/>
    </location>
</feature>
<feature type="repeat" description="TPR 4">
    <location>
        <begin position="154"/>
        <end position="187"/>
    </location>
</feature>
<feature type="repeat" description="TPR 5">
    <location>
        <begin position="189"/>
        <end position="221"/>
    </location>
</feature>
<feature type="repeat" description="TPR 6">
    <location>
        <begin position="222"/>
        <end position="255"/>
    </location>
</feature>
<feature type="repeat" description="TPR 7">
    <location>
        <begin position="268"/>
        <end position="301"/>
    </location>
</feature>
<feature type="repeat" description="TPR 8">
    <location>
        <begin position="306"/>
        <end position="339"/>
    </location>
</feature>
<feature type="repeat" description="TPR 9">
    <location>
        <begin position="340"/>
        <end position="373"/>
    </location>
</feature>
<feature type="domain" description="J" evidence="5">
    <location>
        <begin position="394"/>
        <end position="462"/>
    </location>
</feature>
<feature type="region of interest" description="Flexible linker" evidence="1">
    <location>
        <begin position="375"/>
        <end position="393"/>
    </location>
</feature>
<feature type="region of interest" description="Disordered" evidence="6">
    <location>
        <begin position="451"/>
        <end position="481"/>
    </location>
</feature>
<feature type="modified residue" description="Phosphoserine" evidence="2">
    <location>
        <position position="274"/>
    </location>
</feature>
<feature type="disulfide bond" evidence="1">
    <location>
        <begin position="248"/>
        <end position="258"/>
    </location>
</feature>
<feature type="disulfide bond" evidence="1">
    <location>
        <begin position="313"/>
        <end position="329"/>
    </location>
</feature>
<feature type="sequence conflict" description="In Ref. 2; AAI26581." evidence="8" ref="2">
    <original>D</original>
    <variation>Y</variation>
    <location>
        <position position="36"/>
    </location>
</feature>
<feature type="sequence conflict" description="In Ref. 2; AAI26581." evidence="8" ref="2">
    <original>S</original>
    <variation>N</variation>
    <location>
        <position position="489"/>
    </location>
</feature>
<reference key="1">
    <citation type="journal article" date="1994" name="Mol. Cell. Biol.">
        <title>The 58,000-dalton cellular inhibitor of the interferon-induced double-stranded RNA-activated protein kinase (PKR) is a member of the tetratricopeptide repeat family of proteins.</title>
        <authorList>
            <person name="Lee T.G."/>
            <person name="Tang N."/>
            <person name="Thompson S."/>
            <person name="Miller J."/>
            <person name="Katze M.G."/>
        </authorList>
    </citation>
    <scope>NUCLEOTIDE SEQUENCE [MRNA]</scope>
    <scope>FUNCTION</scope>
</reference>
<reference key="2">
    <citation type="submission" date="2006-10" db="EMBL/GenBank/DDBJ databases">
        <authorList>
            <consortium name="NIH - Mammalian Gene Collection (MGC) project"/>
        </authorList>
    </citation>
    <scope>NUCLEOTIDE SEQUENCE [LARGE SCALE MRNA]</scope>
    <source>
        <strain>Hereford</strain>
        <tissue>Placenta</tissue>
    </source>
</reference>
<reference key="3">
    <citation type="journal article" date="1996" name="Gene">
        <title>Cloning, expression, and cellular localization of the oncogenic 58-kDa inhibitor of the RNA-activated human and mouse protein kinase.</title>
        <authorList>
            <person name="Korth M.J."/>
            <person name="Lyons C.N."/>
            <person name="Wambach M."/>
            <person name="Katze M.G."/>
        </authorList>
    </citation>
    <scope>SUBCELLULAR LOCATION</scope>
</reference>
<gene>
    <name type="primary">DNAJC3</name>
    <name type="synonym">P58IPK</name>
</gene>
<organism>
    <name type="scientific">Bos taurus</name>
    <name type="common">Bovine</name>
    <dbReference type="NCBI Taxonomy" id="9913"/>
    <lineage>
        <taxon>Eukaryota</taxon>
        <taxon>Metazoa</taxon>
        <taxon>Chordata</taxon>
        <taxon>Craniata</taxon>
        <taxon>Vertebrata</taxon>
        <taxon>Euteleostomi</taxon>
        <taxon>Mammalia</taxon>
        <taxon>Eutheria</taxon>
        <taxon>Laurasiatheria</taxon>
        <taxon>Artiodactyla</taxon>
        <taxon>Ruminantia</taxon>
        <taxon>Pecora</taxon>
        <taxon>Bovidae</taxon>
        <taxon>Bovinae</taxon>
        <taxon>Bos</taxon>
    </lineage>
</organism>
<comment type="function">
    <text evidence="3 7">Involved in the unfolded protein response (UPR) during endoplasmic reticulum (ER) stress. Acts as a negative regulator of the EIF2AK4/GCN2 kinase activity by preventing the phosphorylation of eIF-2-alpha at 'Ser-52' and hence attenuating general protein synthesis under ER stress, hypothermic and amino acid starving stress conditions. Co-chaperone of HSPA8/HSC70, it stimulates its ATPase activity. May inhibit both the autophosphorylation of EIF2AK2/PKR and the ability of EIF2AK2 to catalyze phosphorylation of the EIF2A (PubMed:7511204). May inhibit EIF2AK3/PERK activity (By similarity).</text>
</comment>
<comment type="subunit">
    <text evidence="2 3">Interacts with EIF2AK4/GCN2; this interaction occurs under endoplasmic reticulum (ER) stress, hypothermic and amino acid starving stress conditions and inhibits EIF2AK4/GCN2 kinase activity. Interacts with EIF2AK3. Interacts with EIF2AK2. Forms a trimeric complex with DNAJB1 and HSPA8. Interacts with THAP12.</text>
</comment>
<comment type="interaction">
    <interactant intactId="EBI-640793">
        <id>Q27968</id>
    </interactant>
    <interactant intactId="EBI-640775">
        <id>P19525</id>
        <label>EIF2AK2</label>
    </interactant>
    <organismsDiffer>true</organismsDiffer>
    <experiments>5</experiments>
</comment>
<comment type="subcellular location">
    <subcellularLocation>
        <location evidence="1">Endoplasmic reticulum</location>
    </subcellularLocation>
</comment>
<comment type="domain">
    <text evidence="1">The J domain mediates interaction with HSPA8.</text>
</comment>
<comment type="domain">
    <text evidence="1">Binding to misfolded proteins is mediated by a hydrophobic patch forming a large groove within the first two TPR repeats.</text>
</comment>
<proteinExistence type="evidence at protein level"/>
<name>DNJC3_BOVIN</name>
<sequence>MVAPGSVTSRLGSVFPFLLVLVDLQYEGAECGVNADVEKHLELGKKLLAAGQLADALSQFHAAVDGDPDNYIAYYRRATVFLAMGKSKAALPDLTKVIELKMDFTAARLQRGHLLLKQGKLDEAEDDFKKVLKSNPSENEEKEAQSQLVKSDEMQRLRSQALDAFESSDFTAAITFLDKILEVCVWDAELRELRAECFIKEGEPRKAISDLKASSKLKNDNTEAFYKISTLYYELGDHELSLSEVRECLKLDQDHKRCFAHYKQVKKLNKLIESAEELIKEGRYTDAISKYESVMKTEPGVHEYTIRSKERICHCFSKDEKPVEAIRVCSEVLQVEPDNVNALKDRAEAYLIEEMYDEAIQDYETAQEHNENDQQIREGLEKAQRLLKQSQRRDYYKILGVKRNAKKQEIIKAYRKLALQWHPDNFQNEEEKKKAEKKFIDIAAAKEVLSDPEMRKKFDDGEDPLDAESQQGGGGNPFHRSWNSWQGFSPFSSGGPFRFKFHFN</sequence>
<evidence type="ECO:0000250" key="1"/>
<evidence type="ECO:0000250" key="2">
    <source>
        <dbReference type="UniProtKB" id="Q13217"/>
    </source>
</evidence>
<evidence type="ECO:0000250" key="3">
    <source>
        <dbReference type="UniProtKB" id="Q91YW3"/>
    </source>
</evidence>
<evidence type="ECO:0000255" key="4"/>
<evidence type="ECO:0000255" key="5">
    <source>
        <dbReference type="PROSITE-ProRule" id="PRU00286"/>
    </source>
</evidence>
<evidence type="ECO:0000256" key="6">
    <source>
        <dbReference type="SAM" id="MobiDB-lite"/>
    </source>
</evidence>
<evidence type="ECO:0000269" key="7">
    <source>
    </source>
</evidence>
<evidence type="ECO:0000305" key="8"/>
<accession>Q27968</accession>
<accession>A0JN99</accession>
<dbReference type="EMBL" id="U04631">
    <property type="protein sequence ID" value="AAA17795.1"/>
    <property type="molecule type" value="mRNA"/>
</dbReference>
<dbReference type="EMBL" id="BC126580">
    <property type="protein sequence ID" value="AAI26581.1"/>
    <property type="molecule type" value="mRNA"/>
</dbReference>
<dbReference type="PIR" id="A56534">
    <property type="entry name" value="A56534"/>
</dbReference>
<dbReference type="RefSeq" id="NP_777181.1">
    <property type="nucleotide sequence ID" value="NM_174756.3"/>
</dbReference>
<dbReference type="SMR" id="Q27968"/>
<dbReference type="BioGRID" id="159906">
    <property type="interactions" value="2"/>
</dbReference>
<dbReference type="FunCoup" id="Q27968">
    <property type="interactions" value="2925"/>
</dbReference>
<dbReference type="IntAct" id="Q27968">
    <property type="interactions" value="1"/>
</dbReference>
<dbReference type="STRING" id="9913.ENSBTAP00000016001"/>
<dbReference type="PaxDb" id="9913-ENSBTAP00000016001"/>
<dbReference type="GeneID" id="286770"/>
<dbReference type="KEGG" id="bta:286770"/>
<dbReference type="CTD" id="5611"/>
<dbReference type="eggNOG" id="KOG0624">
    <property type="taxonomic scope" value="Eukaryota"/>
</dbReference>
<dbReference type="InParanoid" id="Q27968"/>
<dbReference type="OrthoDB" id="1726119at2759"/>
<dbReference type="Proteomes" id="UP000009136">
    <property type="component" value="Unplaced"/>
</dbReference>
<dbReference type="GO" id="GO:0005829">
    <property type="term" value="C:cytosol"/>
    <property type="evidence" value="ECO:0000250"/>
    <property type="project" value="UniProtKB"/>
</dbReference>
<dbReference type="GO" id="GO:0005783">
    <property type="term" value="C:endoplasmic reticulum"/>
    <property type="evidence" value="ECO:0000250"/>
    <property type="project" value="UniProtKB"/>
</dbReference>
<dbReference type="GO" id="GO:0051787">
    <property type="term" value="F:misfolded protein binding"/>
    <property type="evidence" value="ECO:0000318"/>
    <property type="project" value="GO_Central"/>
</dbReference>
<dbReference type="GO" id="GO:0019901">
    <property type="term" value="F:protein kinase binding"/>
    <property type="evidence" value="ECO:0000250"/>
    <property type="project" value="UniProtKB"/>
</dbReference>
<dbReference type="GO" id="GO:0004860">
    <property type="term" value="F:protein kinase inhibitor activity"/>
    <property type="evidence" value="ECO:0000314"/>
    <property type="project" value="WormBase"/>
</dbReference>
<dbReference type="GO" id="GO:0051087">
    <property type="term" value="F:protein-folding chaperone binding"/>
    <property type="evidence" value="ECO:0000318"/>
    <property type="project" value="GO_Central"/>
</dbReference>
<dbReference type="GO" id="GO:0070417">
    <property type="term" value="P:cellular response to cold"/>
    <property type="evidence" value="ECO:0000250"/>
    <property type="project" value="UniProtKB"/>
</dbReference>
<dbReference type="GO" id="GO:1903912">
    <property type="term" value="P:negative regulation of endoplasmic reticulum stress-induced eIF2 alpha phosphorylation"/>
    <property type="evidence" value="ECO:0000250"/>
    <property type="project" value="UniProtKB"/>
</dbReference>
<dbReference type="GO" id="GO:0036494">
    <property type="term" value="P:positive regulation of translation initiation in response to endoplasmic reticulum stress"/>
    <property type="evidence" value="ECO:0000250"/>
    <property type="project" value="UniProtKB"/>
</dbReference>
<dbReference type="GO" id="GO:0034975">
    <property type="term" value="P:protein folding in endoplasmic reticulum"/>
    <property type="evidence" value="ECO:0000318"/>
    <property type="project" value="GO_Central"/>
</dbReference>
<dbReference type="GO" id="GO:0006986">
    <property type="term" value="P:response to unfolded protein"/>
    <property type="evidence" value="ECO:0007669"/>
    <property type="project" value="UniProtKB-KW"/>
</dbReference>
<dbReference type="CDD" id="cd06257">
    <property type="entry name" value="DnaJ"/>
    <property type="match status" value="1"/>
</dbReference>
<dbReference type="FunFam" id="1.25.40.10:FF:000122">
    <property type="entry name" value="DnaJ (Hsp40) homolog, subfamily C, member 3"/>
    <property type="match status" value="1"/>
</dbReference>
<dbReference type="FunFam" id="1.10.287.110:FF:000015">
    <property type="entry name" value="dnaJ homolog subfamily C member 3"/>
    <property type="match status" value="1"/>
</dbReference>
<dbReference type="Gene3D" id="1.10.287.110">
    <property type="entry name" value="DnaJ domain"/>
    <property type="match status" value="1"/>
</dbReference>
<dbReference type="Gene3D" id="1.25.40.10">
    <property type="entry name" value="Tetratricopeptide repeat domain"/>
    <property type="match status" value="1"/>
</dbReference>
<dbReference type="InterPro" id="IPR051727">
    <property type="entry name" value="DnaJ_C3_Co-chaperones"/>
</dbReference>
<dbReference type="InterPro" id="IPR001623">
    <property type="entry name" value="DnaJ_domain"/>
</dbReference>
<dbReference type="InterPro" id="IPR036869">
    <property type="entry name" value="J_dom_sf"/>
</dbReference>
<dbReference type="InterPro" id="IPR011990">
    <property type="entry name" value="TPR-like_helical_dom_sf"/>
</dbReference>
<dbReference type="InterPro" id="IPR019734">
    <property type="entry name" value="TPR_rpt"/>
</dbReference>
<dbReference type="PANTHER" id="PTHR44140:SF3">
    <property type="entry name" value="DNAJ HOMOLOG SUBFAMILY C MEMBER 3"/>
    <property type="match status" value="1"/>
</dbReference>
<dbReference type="PANTHER" id="PTHR44140">
    <property type="entry name" value="LD25575P"/>
    <property type="match status" value="1"/>
</dbReference>
<dbReference type="Pfam" id="PF00226">
    <property type="entry name" value="DnaJ"/>
    <property type="match status" value="1"/>
</dbReference>
<dbReference type="Pfam" id="PF00515">
    <property type="entry name" value="TPR_1"/>
    <property type="match status" value="1"/>
</dbReference>
<dbReference type="Pfam" id="PF13432">
    <property type="entry name" value="TPR_16"/>
    <property type="match status" value="1"/>
</dbReference>
<dbReference type="Pfam" id="PF13181">
    <property type="entry name" value="TPR_8"/>
    <property type="match status" value="1"/>
</dbReference>
<dbReference type="PRINTS" id="PR00625">
    <property type="entry name" value="JDOMAIN"/>
</dbReference>
<dbReference type="SMART" id="SM00271">
    <property type="entry name" value="DnaJ"/>
    <property type="match status" value="1"/>
</dbReference>
<dbReference type="SMART" id="SM00028">
    <property type="entry name" value="TPR"/>
    <property type="match status" value="8"/>
</dbReference>
<dbReference type="SUPFAM" id="SSF46565">
    <property type="entry name" value="Chaperone J-domain"/>
    <property type="match status" value="1"/>
</dbReference>
<dbReference type="SUPFAM" id="SSF48452">
    <property type="entry name" value="TPR-like"/>
    <property type="match status" value="1"/>
</dbReference>
<dbReference type="PROSITE" id="PS50076">
    <property type="entry name" value="DNAJ_2"/>
    <property type="match status" value="1"/>
</dbReference>
<dbReference type="PROSITE" id="PS50005">
    <property type="entry name" value="TPR"/>
    <property type="match status" value="8"/>
</dbReference>
<dbReference type="PROSITE" id="PS50293">
    <property type="entry name" value="TPR_REGION"/>
    <property type="match status" value="1"/>
</dbReference>
<protein>
    <recommendedName>
        <fullName>DnaJ homolog subfamily C member 3</fullName>
    </recommendedName>
    <alternativeName>
        <fullName>Interferon-induced, double-stranded RNA-activated protein kinase inhibitor</fullName>
    </alternativeName>
    <alternativeName>
        <fullName>Protein kinase inhibitor of 58 kDa</fullName>
        <shortName>Protein kinase inhibitor p58</shortName>
    </alternativeName>
</protein>